<comment type="function">
    <text evidence="2 5 6 7">Negatively regulates T-cell-mediated immune response by inhibiting T-cell activation, proliferation, cytokine production and development of cytotoxicity. When expressed on the cell surface of tumor macrophages, plays an important role, together with regulatory T-cells (Treg), in the suppression of tumor-associated antigen-specific T-cell immunity. Involved in promoting epithelial cell transformation.</text>
</comment>
<comment type="subcellular location">
    <subcellularLocation>
        <location evidence="5 6 7">Cell membrane</location>
        <topology evidence="5 6 7">Lipid-anchor</topology>
        <topology evidence="5 6 7">GPI-anchor</topology>
    </subcellularLocation>
    <text evidence="5 6 7">Expressed at the cell surface. A soluble form has also been detected.</text>
</comment>
<comment type="tissue specificity">
    <text evidence="5 6 7">Expressed on the surface of professional antigen-presenting cells (at protein level). Widely expressed, including in kidney, liver, lung, pancreas, placenta, prostate, spleen, testis and thymus.</text>
</comment>
<comment type="induction">
    <text evidence="6">Down-regulated upon activation of B-cells.</text>
</comment>
<comment type="PTM">
    <text evidence="2">N-glycosylated.</text>
</comment>
<comment type="disruption phenotype">
    <text evidence="8">Mice mount mildy augmented T-helper 1 responses and display slightly lowered parasitic burdens upon Leishmania major infection.</text>
</comment>
<comment type="similarity">
    <text evidence="1">Belongs to the immunoglobulin superfamily. BTN/MOG family.</text>
</comment>
<keyword id="KW-1064">Adaptive immunity</keyword>
<keyword id="KW-1003">Cell membrane</keyword>
<keyword id="KW-1015">Disulfide bond</keyword>
<keyword id="KW-0325">Glycoprotein</keyword>
<keyword id="KW-0336">GPI-anchor</keyword>
<keyword id="KW-0391">Immunity</keyword>
<keyword id="KW-0393">Immunoglobulin domain</keyword>
<keyword id="KW-0449">Lipoprotein</keyword>
<keyword id="KW-0472">Membrane</keyword>
<keyword id="KW-1185">Reference proteome</keyword>
<keyword id="KW-0677">Repeat</keyword>
<keyword id="KW-0732">Signal</keyword>
<reference evidence="9 11" key="1">
    <citation type="journal article" date="2003" name="Immunity">
        <title>B7-H4, a molecule of the B7 family, negatively regulates T cell immunity.</title>
        <authorList>
            <person name="Sica G.L."/>
            <person name="Choi I.-H."/>
            <person name="Zhu G."/>
            <person name="Tamada K."/>
            <person name="Wang S.-D."/>
            <person name="Tamura H."/>
            <person name="Chapoval A.I."/>
            <person name="Flies D.B."/>
            <person name="Bajorath J."/>
            <person name="Chen L."/>
        </authorList>
    </citation>
    <scope>NUCLEOTIDE SEQUENCE [MRNA]</scope>
    <scope>FUNCTION</scope>
    <scope>SUBCELLULAR LOCATION</scope>
    <scope>TISSUE SPECIFICITY</scope>
    <source>
        <strain evidence="11">BALB/cJ</strain>
        <tissue evidence="5">Spleen</tissue>
    </source>
</reference>
<reference evidence="9 12" key="2">
    <citation type="journal article" date="2003" name="Immunity">
        <title>B7S1, a novel B7 family member that negatively regulates T cell activation.</title>
        <authorList>
            <person name="Prasad D.V.R."/>
            <person name="Richards S."/>
            <person name="Mai X.M."/>
            <person name="Dong C."/>
        </authorList>
    </citation>
    <scope>NUCLEOTIDE SEQUENCE [MRNA]</scope>
    <scope>FUNCTION</scope>
    <scope>TISSUE SPECIFICITY</scope>
    <scope>INDUCTION</scope>
    <scope>GPI-ANCHOR</scope>
</reference>
<reference evidence="9 13" key="3">
    <citation type="journal article" date="2003" name="Proc. Natl. Acad. Sci. U.S.A.">
        <title>B7x: a widely expressed B7 family member that inhibits T cell activation.</title>
        <authorList>
            <person name="Zang X."/>
            <person name="Loke P."/>
            <person name="Kim J."/>
            <person name="Murphy K."/>
            <person name="Waitz R."/>
            <person name="Allison J.P."/>
        </authorList>
    </citation>
    <scope>NUCLEOTIDE SEQUENCE [MRNA]</scope>
    <scope>FUNCTION</scope>
    <scope>SUBCELLULAR LOCATION</scope>
    <scope>TISSUE SPECIFICITY</scope>
    <source>
        <strain evidence="13">FVB/N</strain>
    </source>
</reference>
<reference evidence="14" key="4">
    <citation type="journal article" date="2005" name="Science">
        <title>The transcriptional landscape of the mammalian genome.</title>
        <authorList>
            <person name="Carninci P."/>
            <person name="Kasukawa T."/>
            <person name="Katayama S."/>
            <person name="Gough J."/>
            <person name="Frith M.C."/>
            <person name="Maeda N."/>
            <person name="Oyama R."/>
            <person name="Ravasi T."/>
            <person name="Lenhard B."/>
            <person name="Wells C."/>
            <person name="Kodzius R."/>
            <person name="Shimokawa K."/>
            <person name="Bajic V.B."/>
            <person name="Brenner S.E."/>
            <person name="Batalov S."/>
            <person name="Forrest A.R."/>
            <person name="Zavolan M."/>
            <person name="Davis M.J."/>
            <person name="Wilming L.G."/>
            <person name="Aidinis V."/>
            <person name="Allen J.E."/>
            <person name="Ambesi-Impiombato A."/>
            <person name="Apweiler R."/>
            <person name="Aturaliya R.N."/>
            <person name="Bailey T.L."/>
            <person name="Bansal M."/>
            <person name="Baxter L."/>
            <person name="Beisel K.W."/>
            <person name="Bersano T."/>
            <person name="Bono H."/>
            <person name="Chalk A.M."/>
            <person name="Chiu K.P."/>
            <person name="Choudhary V."/>
            <person name="Christoffels A."/>
            <person name="Clutterbuck D.R."/>
            <person name="Crowe M.L."/>
            <person name="Dalla E."/>
            <person name="Dalrymple B.P."/>
            <person name="de Bono B."/>
            <person name="Della Gatta G."/>
            <person name="di Bernardo D."/>
            <person name="Down T."/>
            <person name="Engstrom P."/>
            <person name="Fagiolini M."/>
            <person name="Faulkner G."/>
            <person name="Fletcher C.F."/>
            <person name="Fukushima T."/>
            <person name="Furuno M."/>
            <person name="Futaki S."/>
            <person name="Gariboldi M."/>
            <person name="Georgii-Hemming P."/>
            <person name="Gingeras T.R."/>
            <person name="Gojobori T."/>
            <person name="Green R.E."/>
            <person name="Gustincich S."/>
            <person name="Harbers M."/>
            <person name="Hayashi Y."/>
            <person name="Hensch T.K."/>
            <person name="Hirokawa N."/>
            <person name="Hill D."/>
            <person name="Huminiecki L."/>
            <person name="Iacono M."/>
            <person name="Ikeo K."/>
            <person name="Iwama A."/>
            <person name="Ishikawa T."/>
            <person name="Jakt M."/>
            <person name="Kanapin A."/>
            <person name="Katoh M."/>
            <person name="Kawasawa Y."/>
            <person name="Kelso J."/>
            <person name="Kitamura H."/>
            <person name="Kitano H."/>
            <person name="Kollias G."/>
            <person name="Krishnan S.P."/>
            <person name="Kruger A."/>
            <person name="Kummerfeld S.K."/>
            <person name="Kurochkin I.V."/>
            <person name="Lareau L.F."/>
            <person name="Lazarevic D."/>
            <person name="Lipovich L."/>
            <person name="Liu J."/>
            <person name="Liuni S."/>
            <person name="McWilliam S."/>
            <person name="Madan Babu M."/>
            <person name="Madera M."/>
            <person name="Marchionni L."/>
            <person name="Matsuda H."/>
            <person name="Matsuzawa S."/>
            <person name="Miki H."/>
            <person name="Mignone F."/>
            <person name="Miyake S."/>
            <person name="Morris K."/>
            <person name="Mottagui-Tabar S."/>
            <person name="Mulder N."/>
            <person name="Nakano N."/>
            <person name="Nakauchi H."/>
            <person name="Ng P."/>
            <person name="Nilsson R."/>
            <person name="Nishiguchi S."/>
            <person name="Nishikawa S."/>
            <person name="Nori F."/>
            <person name="Ohara O."/>
            <person name="Okazaki Y."/>
            <person name="Orlando V."/>
            <person name="Pang K.C."/>
            <person name="Pavan W.J."/>
            <person name="Pavesi G."/>
            <person name="Pesole G."/>
            <person name="Petrovsky N."/>
            <person name="Piazza S."/>
            <person name="Reed J."/>
            <person name="Reid J.F."/>
            <person name="Ring B.Z."/>
            <person name="Ringwald M."/>
            <person name="Rost B."/>
            <person name="Ruan Y."/>
            <person name="Salzberg S.L."/>
            <person name="Sandelin A."/>
            <person name="Schneider C."/>
            <person name="Schoenbach C."/>
            <person name="Sekiguchi K."/>
            <person name="Semple C.A."/>
            <person name="Seno S."/>
            <person name="Sessa L."/>
            <person name="Sheng Y."/>
            <person name="Shibata Y."/>
            <person name="Shimada H."/>
            <person name="Shimada K."/>
            <person name="Silva D."/>
            <person name="Sinclair B."/>
            <person name="Sperling S."/>
            <person name="Stupka E."/>
            <person name="Sugiura K."/>
            <person name="Sultana R."/>
            <person name="Takenaka Y."/>
            <person name="Taki K."/>
            <person name="Tammoja K."/>
            <person name="Tan S.L."/>
            <person name="Tang S."/>
            <person name="Taylor M.S."/>
            <person name="Tegner J."/>
            <person name="Teichmann S.A."/>
            <person name="Ueda H.R."/>
            <person name="van Nimwegen E."/>
            <person name="Verardo R."/>
            <person name="Wei C.L."/>
            <person name="Yagi K."/>
            <person name="Yamanishi H."/>
            <person name="Zabarovsky E."/>
            <person name="Zhu S."/>
            <person name="Zimmer A."/>
            <person name="Hide W."/>
            <person name="Bult C."/>
            <person name="Grimmond S.M."/>
            <person name="Teasdale R.D."/>
            <person name="Liu E.T."/>
            <person name="Brusic V."/>
            <person name="Quackenbush J."/>
            <person name="Wahlestedt C."/>
            <person name="Mattick J.S."/>
            <person name="Hume D.A."/>
            <person name="Kai C."/>
            <person name="Sasaki D."/>
            <person name="Tomaru Y."/>
            <person name="Fukuda S."/>
            <person name="Kanamori-Katayama M."/>
            <person name="Suzuki M."/>
            <person name="Aoki J."/>
            <person name="Arakawa T."/>
            <person name="Iida J."/>
            <person name="Imamura K."/>
            <person name="Itoh M."/>
            <person name="Kato T."/>
            <person name="Kawaji H."/>
            <person name="Kawagashira N."/>
            <person name="Kawashima T."/>
            <person name="Kojima M."/>
            <person name="Kondo S."/>
            <person name="Konno H."/>
            <person name="Nakano K."/>
            <person name="Ninomiya N."/>
            <person name="Nishio T."/>
            <person name="Okada M."/>
            <person name="Plessy C."/>
            <person name="Shibata K."/>
            <person name="Shiraki T."/>
            <person name="Suzuki S."/>
            <person name="Tagami M."/>
            <person name="Waki K."/>
            <person name="Watahiki A."/>
            <person name="Okamura-Oho Y."/>
            <person name="Suzuki H."/>
            <person name="Kawai J."/>
            <person name="Hayashizaki Y."/>
        </authorList>
    </citation>
    <scope>NUCLEOTIDE SEQUENCE [LARGE SCALE MRNA]</scope>
    <source>
        <strain evidence="14">C57BL/6J</strain>
        <tissue evidence="15">Blastocyst</tissue>
        <tissue evidence="14">Oviduct</tissue>
    </source>
</reference>
<reference evidence="10" key="5">
    <citation type="journal article" date="2004" name="Genome Res.">
        <title>The status, quality, and expansion of the NIH full-length cDNA project: the Mammalian Gene Collection (MGC).</title>
        <authorList>
            <consortium name="The MGC Project Team"/>
        </authorList>
    </citation>
    <scope>NUCLEOTIDE SEQUENCE [LARGE SCALE MRNA]</scope>
    <source>
        <tissue evidence="10">Uterus</tissue>
    </source>
</reference>
<reference evidence="9" key="6">
    <citation type="journal article" date="2006" name="Mol. Cell. Biol.">
        <title>Generation and characterization of B7-H4/B7S1/B7x-deficient mice.</title>
        <authorList>
            <person name="Suh W.-K."/>
            <person name="Wang S."/>
            <person name="Duncan G.S."/>
            <person name="Miyazaki Y."/>
            <person name="Cates E."/>
            <person name="Walker T."/>
            <person name="Gajewska B.U."/>
            <person name="Deenick E."/>
            <person name="Dawicki W."/>
            <person name="Okada H."/>
            <person name="Wakeham A."/>
            <person name="Itie A."/>
            <person name="Watts T.H."/>
            <person name="Ohashi P.S."/>
            <person name="Jordana M."/>
            <person name="Yoshida H."/>
            <person name="Mak T.W."/>
        </authorList>
    </citation>
    <scope>DISRUPTION PHENOTYPE</scope>
</reference>
<sequence length="283" mass="30875">MASLGQIIFWSIINIIIILAGAIALIIGFGISGKHFITVTTFTSAGNIGEDGTLSCTFEPDIKLNGIVIQWLKEGIKGLVHEFKEGKDDLSQQHEMFRGRTAVFADQVVVGNASLRLKNVQLTDAGTYTCYIRTSKGKGNANLEYKTGAFSMPEINVDYNASSESLRCEAPRWFPQPTVAWASQVDQGANFSEVSNTSFELNSENVTMKVVSVLYNVTINNTYSCMIENDIAKATGDIKVTDSEVKRRSQLQLLNSGPSPCVFSSAFVAGWALLSLSCCLMLR</sequence>
<evidence type="ECO:0000250" key="1">
    <source>
        <dbReference type="UniProtKB" id="Q5ZPR3"/>
    </source>
</evidence>
<evidence type="ECO:0000250" key="2">
    <source>
        <dbReference type="UniProtKB" id="Q7Z7D3"/>
    </source>
</evidence>
<evidence type="ECO:0000255" key="3"/>
<evidence type="ECO:0000255" key="4">
    <source>
        <dbReference type="PROSITE-ProRule" id="PRU00114"/>
    </source>
</evidence>
<evidence type="ECO:0000269" key="5">
    <source>
    </source>
</evidence>
<evidence type="ECO:0000269" key="6">
    <source>
    </source>
</evidence>
<evidence type="ECO:0000269" key="7">
    <source>
    </source>
</evidence>
<evidence type="ECO:0000269" key="8">
    <source>
    </source>
</evidence>
<evidence type="ECO:0000305" key="9"/>
<evidence type="ECO:0000312" key="10">
    <source>
        <dbReference type="EMBL" id="AAH32925.1"/>
    </source>
</evidence>
<evidence type="ECO:0000312" key="11">
    <source>
        <dbReference type="EMBL" id="AAP37284.1"/>
    </source>
</evidence>
<evidence type="ECO:0000312" key="12">
    <source>
        <dbReference type="EMBL" id="AAP88965.1"/>
    </source>
</evidence>
<evidence type="ECO:0000312" key="13">
    <source>
        <dbReference type="EMBL" id="AAQ24205.1"/>
    </source>
</evidence>
<evidence type="ECO:0000312" key="14">
    <source>
        <dbReference type="EMBL" id="BAE25330.1"/>
    </source>
</evidence>
<evidence type="ECO:0000312" key="15">
    <source>
        <dbReference type="EMBL" id="BAE26576.1"/>
    </source>
</evidence>
<evidence type="ECO:0000312" key="16">
    <source>
        <dbReference type="MGI" id="MGI:3039619"/>
    </source>
</evidence>
<accession>Q7TSP5</accession>
<accession>Q7TPH5</accession>
<accession>Q8K091</accession>
<gene>
    <name evidence="16" type="primary">Vtcn1</name>
    <name evidence="2" type="synonym">B7h4</name>
</gene>
<protein>
    <recommendedName>
        <fullName>V-set domain containing T-cell activation inhibitor 1</fullName>
    </recommendedName>
    <alternativeName>
        <fullName>B7 homolog 4</fullName>
        <shortName>B7-H4</shortName>
    </alternativeName>
    <alternativeName>
        <fullName>Immune costimulatory protein B7-H4</fullName>
    </alternativeName>
    <alternativeName>
        <fullName>Protein B7S1</fullName>
    </alternativeName>
    <alternativeName>
        <fullName>T cell costimulatory molecule B7x</fullName>
    </alternativeName>
</protein>
<proteinExistence type="evidence at protein level"/>
<name>VTCN1_MOUSE</name>
<organism>
    <name type="scientific">Mus musculus</name>
    <name type="common">Mouse</name>
    <dbReference type="NCBI Taxonomy" id="10090"/>
    <lineage>
        <taxon>Eukaryota</taxon>
        <taxon>Metazoa</taxon>
        <taxon>Chordata</taxon>
        <taxon>Craniata</taxon>
        <taxon>Vertebrata</taxon>
        <taxon>Euteleostomi</taxon>
        <taxon>Mammalia</taxon>
        <taxon>Eutheria</taxon>
        <taxon>Euarchontoglires</taxon>
        <taxon>Glires</taxon>
        <taxon>Rodentia</taxon>
        <taxon>Myomorpha</taxon>
        <taxon>Muroidea</taxon>
        <taxon>Muridae</taxon>
        <taxon>Murinae</taxon>
        <taxon>Mus</taxon>
        <taxon>Mus</taxon>
    </lineage>
</organism>
<feature type="signal peptide" evidence="3">
    <location>
        <begin position="1"/>
        <end position="24"/>
    </location>
</feature>
<feature type="chain" id="PRO_0000339238" description="V-set domain containing T-cell activation inhibitor 1" evidence="3">
    <location>
        <begin position="25"/>
        <end position="257"/>
    </location>
</feature>
<feature type="propeptide" id="PRO_0000339239" description="Removed in mature form" evidence="3">
    <location>
        <begin position="258"/>
        <end position="283"/>
    </location>
</feature>
<feature type="domain" description="Ig-like V-type 1" evidence="3">
    <location>
        <begin position="35"/>
        <end position="144"/>
    </location>
</feature>
<feature type="domain" description="Ig-like V-type 2" evidence="3">
    <location>
        <begin position="153"/>
        <end position="241"/>
    </location>
</feature>
<feature type="lipid moiety-binding region" description="GPI-anchor amidated glycine" evidence="3">
    <location>
        <position position="257"/>
    </location>
</feature>
<feature type="glycosylation site" description="N-linked (GlcNAc...) asparagine" evidence="3">
    <location>
        <position position="216"/>
    </location>
</feature>
<feature type="disulfide bond" evidence="4">
    <location>
        <begin position="56"/>
        <end position="130"/>
    </location>
</feature>
<feature type="disulfide bond" evidence="4">
    <location>
        <begin position="168"/>
        <end position="225"/>
    </location>
</feature>
<feature type="sequence conflict" description="In Ref. 5; AAH32925." evidence="9" ref="5">
    <original>T</original>
    <variation>S</variation>
    <location>
        <position position="134"/>
    </location>
</feature>
<feature type="sequence conflict" description="In Ref. 5; AAH32925." evidence="9" ref="5">
    <original>F</original>
    <variation>S</variation>
    <location>
        <position position="263"/>
    </location>
</feature>
<feature type="sequence conflict" description="In Ref. 2; AAP88965." evidence="9" ref="2">
    <original>V</original>
    <variation>A</variation>
    <location>
        <position position="268"/>
    </location>
</feature>
<dbReference type="EMBL" id="AY280973">
    <property type="protein sequence ID" value="AAP37284.1"/>
    <property type="molecule type" value="mRNA"/>
</dbReference>
<dbReference type="EMBL" id="AY322147">
    <property type="protein sequence ID" value="AAP88965.1"/>
    <property type="molecule type" value="mRNA"/>
</dbReference>
<dbReference type="EMBL" id="AY346099">
    <property type="protein sequence ID" value="AAQ24205.1"/>
    <property type="molecule type" value="mRNA"/>
</dbReference>
<dbReference type="EMBL" id="AK143276">
    <property type="protein sequence ID" value="BAE25330.1"/>
    <property type="molecule type" value="mRNA"/>
</dbReference>
<dbReference type="EMBL" id="AK145664">
    <property type="protein sequence ID" value="BAE26576.1"/>
    <property type="molecule type" value="mRNA"/>
</dbReference>
<dbReference type="EMBL" id="BC032925">
    <property type="protein sequence ID" value="AAH32925.1"/>
    <property type="molecule type" value="mRNA"/>
</dbReference>
<dbReference type="CCDS" id="CCDS17677.1"/>
<dbReference type="RefSeq" id="NP_848709.2">
    <property type="nucleotide sequence ID" value="NM_178594.4"/>
</dbReference>
<dbReference type="SMR" id="Q7TSP5"/>
<dbReference type="FunCoup" id="Q7TSP5">
    <property type="interactions" value="767"/>
</dbReference>
<dbReference type="STRING" id="10090.ENSMUSP00000057721"/>
<dbReference type="GlyCosmos" id="Q7TSP5">
    <property type="glycosylation" value="1 site, No reported glycans"/>
</dbReference>
<dbReference type="GlyGen" id="Q7TSP5">
    <property type="glycosylation" value="2 sites"/>
</dbReference>
<dbReference type="PhosphoSitePlus" id="Q7TSP5"/>
<dbReference type="PaxDb" id="10090-ENSMUSP00000057721"/>
<dbReference type="ProteomicsDB" id="297933"/>
<dbReference type="Antibodypedia" id="33888">
    <property type="antibodies" value="891 antibodies from 45 providers"/>
</dbReference>
<dbReference type="Ensembl" id="ENSMUST00000054791.9">
    <property type="protein sequence ID" value="ENSMUSP00000057721.8"/>
    <property type="gene ID" value="ENSMUSG00000051076.9"/>
</dbReference>
<dbReference type="GeneID" id="242122"/>
<dbReference type="KEGG" id="mmu:242122"/>
<dbReference type="UCSC" id="uc008qqx.2">
    <property type="organism name" value="mouse"/>
</dbReference>
<dbReference type="AGR" id="MGI:3039619"/>
<dbReference type="CTD" id="79679"/>
<dbReference type="MGI" id="MGI:3039619">
    <property type="gene designation" value="Vtcn1"/>
</dbReference>
<dbReference type="VEuPathDB" id="HostDB:ENSMUSG00000051076"/>
<dbReference type="eggNOG" id="ENOG502S286">
    <property type="taxonomic scope" value="Eukaryota"/>
</dbReference>
<dbReference type="GeneTree" id="ENSGT00940000157300"/>
<dbReference type="HOGENOM" id="CLU_013137_8_6_1"/>
<dbReference type="InParanoid" id="Q7TSP5"/>
<dbReference type="OMA" id="CYIVTSK"/>
<dbReference type="OrthoDB" id="9898017at2759"/>
<dbReference type="PhylomeDB" id="Q7TSP5"/>
<dbReference type="TreeFam" id="TF331083"/>
<dbReference type="BioGRID-ORCS" id="242122">
    <property type="hits" value="0 hits in 80 CRISPR screens"/>
</dbReference>
<dbReference type="PRO" id="PR:Q7TSP5"/>
<dbReference type="Proteomes" id="UP000000589">
    <property type="component" value="Chromosome 3"/>
</dbReference>
<dbReference type="RNAct" id="Q7TSP5">
    <property type="molecule type" value="protein"/>
</dbReference>
<dbReference type="Bgee" id="ENSMUSG00000051076">
    <property type="expression patterns" value="Expressed in placenta labyrinth and 28 other cell types or tissues"/>
</dbReference>
<dbReference type="GO" id="GO:0009897">
    <property type="term" value="C:external side of plasma membrane"/>
    <property type="evidence" value="ECO:0000314"/>
    <property type="project" value="MGI"/>
</dbReference>
<dbReference type="GO" id="GO:0005102">
    <property type="term" value="F:signaling receptor binding"/>
    <property type="evidence" value="ECO:0000314"/>
    <property type="project" value="MGI"/>
</dbReference>
<dbReference type="GO" id="GO:0002250">
    <property type="term" value="P:adaptive immune response"/>
    <property type="evidence" value="ECO:0007669"/>
    <property type="project" value="UniProtKB-KW"/>
</dbReference>
<dbReference type="GO" id="GO:0043066">
    <property type="term" value="P:negative regulation of apoptotic process"/>
    <property type="evidence" value="ECO:0007669"/>
    <property type="project" value="Ensembl"/>
</dbReference>
<dbReference type="GO" id="GO:0050868">
    <property type="term" value="P:negative regulation of T cell activation"/>
    <property type="evidence" value="ECO:0000314"/>
    <property type="project" value="MGI"/>
</dbReference>
<dbReference type="GO" id="GO:0042130">
    <property type="term" value="P:negative regulation of T cell proliferation"/>
    <property type="evidence" value="ECO:0007669"/>
    <property type="project" value="Ensembl"/>
</dbReference>
<dbReference type="GO" id="GO:0032743">
    <property type="term" value="P:positive regulation of interleukin-2 production"/>
    <property type="evidence" value="ECO:0000315"/>
    <property type="project" value="MGI"/>
</dbReference>
<dbReference type="GO" id="GO:0042102">
    <property type="term" value="P:positive regulation of T cell proliferation"/>
    <property type="evidence" value="ECO:0000315"/>
    <property type="project" value="MGI"/>
</dbReference>
<dbReference type="GO" id="GO:0001562">
    <property type="term" value="P:response to protozoan"/>
    <property type="evidence" value="ECO:0000315"/>
    <property type="project" value="MGI"/>
</dbReference>
<dbReference type="CDD" id="cd20984">
    <property type="entry name" value="IgV_B7-H4"/>
    <property type="match status" value="1"/>
</dbReference>
<dbReference type="FunFam" id="2.60.40.10:FF:000590">
    <property type="entry name" value="V-set domain-containing T cell activation inhibitor 1"/>
    <property type="match status" value="1"/>
</dbReference>
<dbReference type="FunFam" id="2.60.40.10:FF:000142">
    <property type="entry name" value="V-set domain-containing T-cell activation inhibitor 1"/>
    <property type="match status" value="1"/>
</dbReference>
<dbReference type="Gene3D" id="2.60.40.10">
    <property type="entry name" value="Immunoglobulins"/>
    <property type="match status" value="2"/>
</dbReference>
<dbReference type="InterPro" id="IPR053896">
    <property type="entry name" value="BTN3A2-like_Ig-C"/>
</dbReference>
<dbReference type="InterPro" id="IPR007110">
    <property type="entry name" value="Ig-like_dom"/>
</dbReference>
<dbReference type="InterPro" id="IPR036179">
    <property type="entry name" value="Ig-like_dom_sf"/>
</dbReference>
<dbReference type="InterPro" id="IPR013783">
    <property type="entry name" value="Ig-like_fold"/>
</dbReference>
<dbReference type="InterPro" id="IPR003599">
    <property type="entry name" value="Ig_sub"/>
</dbReference>
<dbReference type="InterPro" id="IPR003598">
    <property type="entry name" value="Ig_sub2"/>
</dbReference>
<dbReference type="InterPro" id="IPR013106">
    <property type="entry name" value="Ig_V-set"/>
</dbReference>
<dbReference type="InterPro" id="IPR050504">
    <property type="entry name" value="IgSF_BTN/MOG"/>
</dbReference>
<dbReference type="PANTHER" id="PTHR24100">
    <property type="entry name" value="BUTYROPHILIN"/>
    <property type="match status" value="1"/>
</dbReference>
<dbReference type="PANTHER" id="PTHR24100:SF0">
    <property type="entry name" value="V-SET DOMAIN-CONTAINING T-CELL ACTIVATION INHIBITOR 1"/>
    <property type="match status" value="1"/>
</dbReference>
<dbReference type="Pfam" id="PF22705">
    <property type="entry name" value="C2-set_3"/>
    <property type="match status" value="1"/>
</dbReference>
<dbReference type="Pfam" id="PF07686">
    <property type="entry name" value="V-set"/>
    <property type="match status" value="1"/>
</dbReference>
<dbReference type="SMART" id="SM00409">
    <property type="entry name" value="IG"/>
    <property type="match status" value="1"/>
</dbReference>
<dbReference type="SMART" id="SM00408">
    <property type="entry name" value="IGc2"/>
    <property type="match status" value="1"/>
</dbReference>
<dbReference type="SUPFAM" id="SSF48726">
    <property type="entry name" value="Immunoglobulin"/>
    <property type="match status" value="2"/>
</dbReference>
<dbReference type="PROSITE" id="PS50835">
    <property type="entry name" value="IG_LIKE"/>
    <property type="match status" value="2"/>
</dbReference>